<organism>
    <name type="scientific">Escherichia coli (strain K12 / DH10B)</name>
    <dbReference type="NCBI Taxonomy" id="316385"/>
    <lineage>
        <taxon>Bacteria</taxon>
        <taxon>Pseudomonadati</taxon>
        <taxon>Pseudomonadota</taxon>
        <taxon>Gammaproteobacteria</taxon>
        <taxon>Enterobacterales</taxon>
        <taxon>Enterobacteriaceae</taxon>
        <taxon>Escherichia</taxon>
    </lineage>
</organism>
<name>SPEE_ECODH</name>
<keyword id="KW-0963">Cytoplasm</keyword>
<keyword id="KW-0620">Polyamine biosynthesis</keyword>
<keyword id="KW-0745">Spermidine biosynthesis</keyword>
<keyword id="KW-0808">Transferase</keyword>
<feature type="chain" id="PRO_1000099281" description="Polyamine aminopropyltransferase">
    <location>
        <begin position="1"/>
        <end position="288"/>
    </location>
</feature>
<feature type="domain" description="PABS" evidence="1">
    <location>
        <begin position="9"/>
        <end position="238"/>
    </location>
</feature>
<feature type="active site" description="Proton acceptor" evidence="1">
    <location>
        <position position="158"/>
    </location>
</feature>
<feature type="binding site" evidence="1">
    <location>
        <position position="33"/>
    </location>
    <ligand>
        <name>S-methyl-5'-thioadenosine</name>
        <dbReference type="ChEBI" id="CHEBI:17509"/>
    </ligand>
</feature>
<feature type="binding site" evidence="1">
    <location>
        <position position="64"/>
    </location>
    <ligand>
        <name>spermidine</name>
        <dbReference type="ChEBI" id="CHEBI:57834"/>
    </ligand>
</feature>
<feature type="binding site" evidence="1">
    <location>
        <position position="88"/>
    </location>
    <ligand>
        <name>spermidine</name>
        <dbReference type="ChEBI" id="CHEBI:57834"/>
    </ligand>
</feature>
<feature type="binding site" evidence="1">
    <location>
        <position position="108"/>
    </location>
    <ligand>
        <name>S-methyl-5'-thioadenosine</name>
        <dbReference type="ChEBI" id="CHEBI:17509"/>
    </ligand>
</feature>
<feature type="binding site" evidence="1">
    <location>
        <begin position="140"/>
        <end position="141"/>
    </location>
    <ligand>
        <name>S-methyl-5'-thioadenosine</name>
        <dbReference type="ChEBI" id="CHEBI:17509"/>
    </ligand>
</feature>
<feature type="binding site" evidence="1">
    <location>
        <begin position="158"/>
        <end position="161"/>
    </location>
    <ligand>
        <name>spermidine</name>
        <dbReference type="ChEBI" id="CHEBI:57834"/>
    </ligand>
</feature>
<feature type="binding site" evidence="1">
    <location>
        <position position="165"/>
    </location>
    <ligand>
        <name>S-methyl-5'-thioadenosine</name>
        <dbReference type="ChEBI" id="CHEBI:17509"/>
    </ligand>
</feature>
<protein>
    <recommendedName>
        <fullName evidence="1">Polyamine aminopropyltransferase</fullName>
    </recommendedName>
    <alternativeName>
        <fullName evidence="1">Putrescine aminopropyltransferase</fullName>
        <shortName evidence="1">PAPT</shortName>
    </alternativeName>
    <alternativeName>
        <fullName evidence="1">Spermidine synthase</fullName>
        <shortName evidence="1">SPDS</shortName>
        <shortName evidence="1">SPDSY</shortName>
        <ecNumber evidence="1">2.5.1.16</ecNumber>
    </alternativeName>
</protein>
<dbReference type="EC" id="2.5.1.16" evidence="1"/>
<dbReference type="EMBL" id="CP000948">
    <property type="protein sequence ID" value="ACB01300.1"/>
    <property type="molecule type" value="Genomic_DNA"/>
</dbReference>
<dbReference type="RefSeq" id="WP_000818411.1">
    <property type="nucleotide sequence ID" value="NC_010473.1"/>
</dbReference>
<dbReference type="SMR" id="B1XC96"/>
<dbReference type="GeneID" id="75202064"/>
<dbReference type="KEGG" id="ecd:ECDH10B_0101"/>
<dbReference type="HOGENOM" id="CLU_048199_0_0_6"/>
<dbReference type="UniPathway" id="UPA00248">
    <property type="reaction ID" value="UER00314"/>
</dbReference>
<dbReference type="GO" id="GO:0005829">
    <property type="term" value="C:cytosol"/>
    <property type="evidence" value="ECO:0007669"/>
    <property type="project" value="TreeGrafter"/>
</dbReference>
<dbReference type="GO" id="GO:0004766">
    <property type="term" value="F:spermidine synthase activity"/>
    <property type="evidence" value="ECO:0007669"/>
    <property type="project" value="UniProtKB-UniRule"/>
</dbReference>
<dbReference type="GO" id="GO:0008295">
    <property type="term" value="P:spermidine biosynthetic process"/>
    <property type="evidence" value="ECO:0007669"/>
    <property type="project" value="UniProtKB-UniRule"/>
</dbReference>
<dbReference type="CDD" id="cd02440">
    <property type="entry name" value="AdoMet_MTases"/>
    <property type="match status" value="1"/>
</dbReference>
<dbReference type="FunFam" id="2.30.140.10:FF:000002">
    <property type="entry name" value="Polyamine aminopropyltransferase"/>
    <property type="match status" value="1"/>
</dbReference>
<dbReference type="FunFam" id="3.40.50.150:FF:000026">
    <property type="entry name" value="Polyamine aminopropyltransferase"/>
    <property type="match status" value="1"/>
</dbReference>
<dbReference type="Gene3D" id="2.30.140.10">
    <property type="entry name" value="Spermidine synthase, tetramerisation domain"/>
    <property type="match status" value="1"/>
</dbReference>
<dbReference type="Gene3D" id="3.40.50.150">
    <property type="entry name" value="Vaccinia Virus protein VP39"/>
    <property type="match status" value="1"/>
</dbReference>
<dbReference type="HAMAP" id="MF_00198">
    <property type="entry name" value="Spermidine_synth"/>
    <property type="match status" value="1"/>
</dbReference>
<dbReference type="InterPro" id="IPR030374">
    <property type="entry name" value="PABS"/>
</dbReference>
<dbReference type="InterPro" id="IPR030373">
    <property type="entry name" value="PABS_CS"/>
</dbReference>
<dbReference type="InterPro" id="IPR029063">
    <property type="entry name" value="SAM-dependent_MTases_sf"/>
</dbReference>
<dbReference type="InterPro" id="IPR001045">
    <property type="entry name" value="Spermi_synthase"/>
</dbReference>
<dbReference type="InterPro" id="IPR035246">
    <property type="entry name" value="Spermidine_synt_N"/>
</dbReference>
<dbReference type="InterPro" id="IPR037163">
    <property type="entry name" value="Spermidine_synt_N_sf"/>
</dbReference>
<dbReference type="NCBIfam" id="NF037959">
    <property type="entry name" value="MFS_SpdSyn"/>
    <property type="match status" value="1"/>
</dbReference>
<dbReference type="NCBIfam" id="NF002010">
    <property type="entry name" value="PRK00811.1"/>
    <property type="match status" value="1"/>
</dbReference>
<dbReference type="NCBIfam" id="TIGR00417">
    <property type="entry name" value="speE"/>
    <property type="match status" value="1"/>
</dbReference>
<dbReference type="PANTHER" id="PTHR11558:SF11">
    <property type="entry name" value="SPERMIDINE SYNTHASE"/>
    <property type="match status" value="1"/>
</dbReference>
<dbReference type="PANTHER" id="PTHR11558">
    <property type="entry name" value="SPERMIDINE/SPERMINE SYNTHASE"/>
    <property type="match status" value="1"/>
</dbReference>
<dbReference type="Pfam" id="PF17284">
    <property type="entry name" value="Spermine_synt_N"/>
    <property type="match status" value="1"/>
</dbReference>
<dbReference type="Pfam" id="PF01564">
    <property type="entry name" value="Spermine_synth"/>
    <property type="match status" value="1"/>
</dbReference>
<dbReference type="SUPFAM" id="SSF53335">
    <property type="entry name" value="S-adenosyl-L-methionine-dependent methyltransferases"/>
    <property type="match status" value="1"/>
</dbReference>
<dbReference type="PROSITE" id="PS01330">
    <property type="entry name" value="PABS_1"/>
    <property type="match status" value="1"/>
</dbReference>
<dbReference type="PROSITE" id="PS51006">
    <property type="entry name" value="PABS_2"/>
    <property type="match status" value="1"/>
</dbReference>
<evidence type="ECO:0000255" key="1">
    <source>
        <dbReference type="HAMAP-Rule" id="MF_00198"/>
    </source>
</evidence>
<sequence length="288" mass="32321">MAEKKQWHETLHDQFGQYFAVDNVLYHEKTDHQDLIIFENAAFGRVMALDGVVQTTERDEFIYHEMMTHVPLLAHGHAKHVLIIGGGDGAMLREVTRHKNVESITMVEIDAGVVSFCRQYLPNHNAGSYDDPRFKLVIDDGVNFVNQTSQTFDVIISDCTDPIGPGESLFTSAFYEGCKRCLNPGGIFVAQNGVCFLQQEEAIDSHRKLSHYFSDVGFYQAAIPTYYGGIMTFAWATDNDALRHLSTEIIQARFLASGLKCRYYNPAIHTAAFALPQYLQDALASQPS</sequence>
<proteinExistence type="inferred from homology"/>
<accession>B1XC96</accession>
<comment type="function">
    <text evidence="1">Catalyzes the irreversible transfer of a propylamine group from the amino donor S-adenosylmethioninamine (decarboxy-AdoMet) to putrescine (1,4-diaminobutane) to yield spermidine.</text>
</comment>
<comment type="catalytic activity">
    <reaction evidence="1">
        <text>S-adenosyl 3-(methylsulfanyl)propylamine + putrescine = S-methyl-5'-thioadenosine + spermidine + H(+)</text>
        <dbReference type="Rhea" id="RHEA:12721"/>
        <dbReference type="ChEBI" id="CHEBI:15378"/>
        <dbReference type="ChEBI" id="CHEBI:17509"/>
        <dbReference type="ChEBI" id="CHEBI:57443"/>
        <dbReference type="ChEBI" id="CHEBI:57834"/>
        <dbReference type="ChEBI" id="CHEBI:326268"/>
        <dbReference type="EC" id="2.5.1.16"/>
    </reaction>
</comment>
<comment type="pathway">
    <text evidence="1">Amine and polyamine biosynthesis; spermidine biosynthesis; spermidine from putrescine: step 1/1.</text>
</comment>
<comment type="subunit">
    <text evidence="1">Homodimer or homotetramer.</text>
</comment>
<comment type="subcellular location">
    <subcellularLocation>
        <location evidence="1">Cytoplasm</location>
    </subcellularLocation>
</comment>
<comment type="similarity">
    <text evidence="1">Belongs to the spermidine/spermine synthase family.</text>
</comment>
<reference key="1">
    <citation type="journal article" date="2008" name="J. Bacteriol.">
        <title>The complete genome sequence of Escherichia coli DH10B: insights into the biology of a laboratory workhorse.</title>
        <authorList>
            <person name="Durfee T."/>
            <person name="Nelson R."/>
            <person name="Baldwin S."/>
            <person name="Plunkett G. III"/>
            <person name="Burland V."/>
            <person name="Mau B."/>
            <person name="Petrosino J.F."/>
            <person name="Qin X."/>
            <person name="Muzny D.M."/>
            <person name="Ayele M."/>
            <person name="Gibbs R.A."/>
            <person name="Csorgo B."/>
            <person name="Posfai G."/>
            <person name="Weinstock G.M."/>
            <person name="Blattner F.R."/>
        </authorList>
    </citation>
    <scope>NUCLEOTIDE SEQUENCE [LARGE SCALE GENOMIC DNA]</scope>
    <source>
        <strain>K12 / DH10B</strain>
    </source>
</reference>
<gene>
    <name evidence="1" type="primary">speE</name>
    <name type="ordered locus">ECDH10B_0101</name>
</gene>